<gene>
    <name evidence="1" type="primary">ybeY</name>
    <name type="ordered locus">PD_1781</name>
</gene>
<dbReference type="EC" id="3.1.-.-" evidence="1"/>
<dbReference type="EMBL" id="AE009442">
    <property type="protein sequence ID" value="AAO29615.1"/>
    <property type="molecule type" value="Genomic_DNA"/>
</dbReference>
<dbReference type="RefSeq" id="WP_004089607.1">
    <property type="nucleotide sequence ID" value="NC_004556.1"/>
</dbReference>
<dbReference type="SMR" id="Q87AP2"/>
<dbReference type="GeneID" id="93905630"/>
<dbReference type="KEGG" id="xft:PD_1781"/>
<dbReference type="HOGENOM" id="CLU_106710_0_1_6"/>
<dbReference type="Proteomes" id="UP000002516">
    <property type="component" value="Chromosome"/>
</dbReference>
<dbReference type="GO" id="GO:0005737">
    <property type="term" value="C:cytoplasm"/>
    <property type="evidence" value="ECO:0007669"/>
    <property type="project" value="UniProtKB-SubCell"/>
</dbReference>
<dbReference type="GO" id="GO:0004222">
    <property type="term" value="F:metalloendopeptidase activity"/>
    <property type="evidence" value="ECO:0007669"/>
    <property type="project" value="InterPro"/>
</dbReference>
<dbReference type="GO" id="GO:0004521">
    <property type="term" value="F:RNA endonuclease activity"/>
    <property type="evidence" value="ECO:0007669"/>
    <property type="project" value="UniProtKB-UniRule"/>
</dbReference>
<dbReference type="GO" id="GO:0008270">
    <property type="term" value="F:zinc ion binding"/>
    <property type="evidence" value="ECO:0007669"/>
    <property type="project" value="UniProtKB-UniRule"/>
</dbReference>
<dbReference type="GO" id="GO:0006364">
    <property type="term" value="P:rRNA processing"/>
    <property type="evidence" value="ECO:0007669"/>
    <property type="project" value="UniProtKB-UniRule"/>
</dbReference>
<dbReference type="Gene3D" id="3.40.390.30">
    <property type="entry name" value="Metalloproteases ('zincins'), catalytic domain"/>
    <property type="match status" value="1"/>
</dbReference>
<dbReference type="HAMAP" id="MF_00009">
    <property type="entry name" value="Endoribonucl_YbeY"/>
    <property type="match status" value="1"/>
</dbReference>
<dbReference type="InterPro" id="IPR023091">
    <property type="entry name" value="MetalPrtase_cat_dom_sf_prd"/>
</dbReference>
<dbReference type="InterPro" id="IPR002036">
    <property type="entry name" value="YbeY"/>
</dbReference>
<dbReference type="InterPro" id="IPR020549">
    <property type="entry name" value="YbeY_CS"/>
</dbReference>
<dbReference type="NCBIfam" id="TIGR00043">
    <property type="entry name" value="rRNA maturation RNase YbeY"/>
    <property type="match status" value="1"/>
</dbReference>
<dbReference type="PANTHER" id="PTHR46986">
    <property type="entry name" value="ENDORIBONUCLEASE YBEY, CHLOROPLASTIC"/>
    <property type="match status" value="1"/>
</dbReference>
<dbReference type="PANTHER" id="PTHR46986:SF1">
    <property type="entry name" value="ENDORIBONUCLEASE YBEY, CHLOROPLASTIC"/>
    <property type="match status" value="1"/>
</dbReference>
<dbReference type="Pfam" id="PF02130">
    <property type="entry name" value="YbeY"/>
    <property type="match status" value="1"/>
</dbReference>
<dbReference type="SUPFAM" id="SSF55486">
    <property type="entry name" value="Metalloproteases ('zincins'), catalytic domain"/>
    <property type="match status" value="1"/>
</dbReference>
<dbReference type="PROSITE" id="PS01306">
    <property type="entry name" value="UPF0054"/>
    <property type="match status" value="1"/>
</dbReference>
<organism>
    <name type="scientific">Xylella fastidiosa (strain Temecula1 / ATCC 700964)</name>
    <dbReference type="NCBI Taxonomy" id="183190"/>
    <lineage>
        <taxon>Bacteria</taxon>
        <taxon>Pseudomonadati</taxon>
        <taxon>Pseudomonadota</taxon>
        <taxon>Gammaproteobacteria</taxon>
        <taxon>Lysobacterales</taxon>
        <taxon>Lysobacteraceae</taxon>
        <taxon>Xylella</taxon>
    </lineage>
</organism>
<protein>
    <recommendedName>
        <fullName evidence="1">Endoribonuclease YbeY</fullName>
        <ecNumber evidence="1">3.1.-.-</ecNumber>
    </recommendedName>
</protein>
<accession>Q87AP2</accession>
<proteinExistence type="inferred from homology"/>
<name>YBEY_XYLFT</name>
<reference key="1">
    <citation type="journal article" date="2003" name="J. Bacteriol.">
        <title>Comparative analyses of the complete genome sequences of Pierce's disease and citrus variegated chlorosis strains of Xylella fastidiosa.</title>
        <authorList>
            <person name="Van Sluys M.A."/>
            <person name="de Oliveira M.C."/>
            <person name="Monteiro-Vitorello C.B."/>
            <person name="Miyaki C.Y."/>
            <person name="Furlan L.R."/>
            <person name="Camargo L.E.A."/>
            <person name="da Silva A.C.R."/>
            <person name="Moon D.H."/>
            <person name="Takita M.A."/>
            <person name="Lemos E.G.M."/>
            <person name="Machado M.A."/>
            <person name="Ferro M.I.T."/>
            <person name="da Silva F.R."/>
            <person name="Goldman M.H.S."/>
            <person name="Goldman G.H."/>
            <person name="Lemos M.V.F."/>
            <person name="El-Dorry H."/>
            <person name="Tsai S.M."/>
            <person name="Carrer H."/>
            <person name="Carraro D.M."/>
            <person name="de Oliveira R.C."/>
            <person name="Nunes L.R."/>
            <person name="Siqueira W.J."/>
            <person name="Coutinho L.L."/>
            <person name="Kimura E.T."/>
            <person name="Ferro E.S."/>
            <person name="Harakava R."/>
            <person name="Kuramae E.E."/>
            <person name="Marino C.L."/>
            <person name="Giglioti E."/>
            <person name="Abreu I.L."/>
            <person name="Alves L.M.C."/>
            <person name="do Amaral A.M."/>
            <person name="Baia G.S."/>
            <person name="Blanco S.R."/>
            <person name="Brito M.S."/>
            <person name="Cannavan F.S."/>
            <person name="Celestino A.V."/>
            <person name="da Cunha A.F."/>
            <person name="Fenille R.C."/>
            <person name="Ferro J.A."/>
            <person name="Formighieri E.F."/>
            <person name="Kishi L.T."/>
            <person name="Leoni S.G."/>
            <person name="Oliveira A.R."/>
            <person name="Rosa V.E. Jr."/>
            <person name="Sassaki F.T."/>
            <person name="Sena J.A.D."/>
            <person name="de Souza A.A."/>
            <person name="Truffi D."/>
            <person name="Tsukumo F."/>
            <person name="Yanai G.M."/>
            <person name="Zaros L.G."/>
            <person name="Civerolo E.L."/>
            <person name="Simpson A.J.G."/>
            <person name="Almeida N.F. Jr."/>
            <person name="Setubal J.C."/>
            <person name="Kitajima J.P."/>
        </authorList>
    </citation>
    <scope>NUCLEOTIDE SEQUENCE [LARGE SCALE GENOMIC DNA]</scope>
    <source>
        <strain>Temecula1 / ATCC 700964</strain>
    </source>
</reference>
<comment type="function">
    <text evidence="1">Single strand-specific metallo-endoribonuclease involved in late-stage 70S ribosome quality control and in maturation of the 3' terminus of the 16S rRNA.</text>
</comment>
<comment type="cofactor">
    <cofactor evidence="1">
        <name>Zn(2+)</name>
        <dbReference type="ChEBI" id="CHEBI:29105"/>
    </cofactor>
    <text evidence="1">Binds 1 zinc ion.</text>
</comment>
<comment type="subcellular location">
    <subcellularLocation>
        <location evidence="1">Cytoplasm</location>
    </subcellularLocation>
</comment>
<comment type="similarity">
    <text evidence="1">Belongs to the endoribonuclease YbeY family.</text>
</comment>
<feature type="chain" id="PRO_0000102574" description="Endoribonuclease YbeY">
    <location>
        <begin position="1"/>
        <end position="161"/>
    </location>
</feature>
<feature type="binding site" evidence="1">
    <location>
        <position position="121"/>
    </location>
    <ligand>
        <name>Zn(2+)</name>
        <dbReference type="ChEBI" id="CHEBI:29105"/>
        <note>catalytic</note>
    </ligand>
</feature>
<feature type="binding site" evidence="1">
    <location>
        <position position="125"/>
    </location>
    <ligand>
        <name>Zn(2+)</name>
        <dbReference type="ChEBI" id="CHEBI:29105"/>
        <note>catalytic</note>
    </ligand>
</feature>
<feature type="binding site" evidence="1">
    <location>
        <position position="131"/>
    </location>
    <ligand>
        <name>Zn(2+)</name>
        <dbReference type="ChEBI" id="CHEBI:29105"/>
        <note>catalytic</note>
    </ligand>
</feature>
<sequence length="161" mass="18013">MTRGPIFLNVGISYGLPRTKLPAAVSFRKWVAATLQGRIRKADLAIRIVDEKEGRALNYHYRNKDYATNVLSFPAQLPEPFPKALKIPLLGDIVMCAPVIAREATEQGKSLSAHYAHLTVHGTLHLLGWNHEDHQEADAMEQLEREILANLGISDPYLGEY</sequence>
<evidence type="ECO:0000255" key="1">
    <source>
        <dbReference type="HAMAP-Rule" id="MF_00009"/>
    </source>
</evidence>
<keyword id="KW-0963">Cytoplasm</keyword>
<keyword id="KW-0255">Endonuclease</keyword>
<keyword id="KW-0378">Hydrolase</keyword>
<keyword id="KW-0479">Metal-binding</keyword>
<keyword id="KW-0540">Nuclease</keyword>
<keyword id="KW-1185">Reference proteome</keyword>
<keyword id="KW-0690">Ribosome biogenesis</keyword>
<keyword id="KW-0698">rRNA processing</keyword>
<keyword id="KW-0862">Zinc</keyword>